<dbReference type="EC" id="2.7.2.8" evidence="1"/>
<dbReference type="EMBL" id="CP000038">
    <property type="protein sequence ID" value="AAZ90645.1"/>
    <property type="molecule type" value="Genomic_DNA"/>
</dbReference>
<dbReference type="SMR" id="Q3YV17"/>
<dbReference type="KEGG" id="ssn:SSON_4132"/>
<dbReference type="HOGENOM" id="CLU_053680_1_1_6"/>
<dbReference type="UniPathway" id="UPA00068">
    <property type="reaction ID" value="UER00107"/>
</dbReference>
<dbReference type="Proteomes" id="UP000002529">
    <property type="component" value="Chromosome"/>
</dbReference>
<dbReference type="GO" id="GO:0005737">
    <property type="term" value="C:cytoplasm"/>
    <property type="evidence" value="ECO:0007669"/>
    <property type="project" value="UniProtKB-SubCell"/>
</dbReference>
<dbReference type="GO" id="GO:0003991">
    <property type="term" value="F:acetylglutamate kinase activity"/>
    <property type="evidence" value="ECO:0007669"/>
    <property type="project" value="UniProtKB-UniRule"/>
</dbReference>
<dbReference type="GO" id="GO:0005524">
    <property type="term" value="F:ATP binding"/>
    <property type="evidence" value="ECO:0007669"/>
    <property type="project" value="UniProtKB-UniRule"/>
</dbReference>
<dbReference type="GO" id="GO:0042450">
    <property type="term" value="P:arginine biosynthetic process via ornithine"/>
    <property type="evidence" value="ECO:0007669"/>
    <property type="project" value="UniProtKB-UniRule"/>
</dbReference>
<dbReference type="GO" id="GO:0006526">
    <property type="term" value="P:L-arginine biosynthetic process"/>
    <property type="evidence" value="ECO:0007669"/>
    <property type="project" value="UniProtKB-UniPathway"/>
</dbReference>
<dbReference type="CDD" id="cd04249">
    <property type="entry name" value="AAK_NAGK-NC"/>
    <property type="match status" value="1"/>
</dbReference>
<dbReference type="FunFam" id="3.40.1160.10:FF:000008">
    <property type="entry name" value="Acetylglutamate kinase"/>
    <property type="match status" value="1"/>
</dbReference>
<dbReference type="Gene3D" id="3.40.1160.10">
    <property type="entry name" value="Acetylglutamate kinase-like"/>
    <property type="match status" value="1"/>
</dbReference>
<dbReference type="HAMAP" id="MF_00082">
    <property type="entry name" value="ArgB"/>
    <property type="match status" value="1"/>
</dbReference>
<dbReference type="InterPro" id="IPR036393">
    <property type="entry name" value="AceGlu_kinase-like_sf"/>
</dbReference>
<dbReference type="InterPro" id="IPR004662">
    <property type="entry name" value="AcgluKinase_fam"/>
</dbReference>
<dbReference type="InterPro" id="IPR037528">
    <property type="entry name" value="ArgB"/>
</dbReference>
<dbReference type="InterPro" id="IPR001048">
    <property type="entry name" value="Asp/Glu/Uridylate_kinase"/>
</dbReference>
<dbReference type="InterPro" id="IPR041731">
    <property type="entry name" value="NAGK-NC"/>
</dbReference>
<dbReference type="NCBIfam" id="TIGR00761">
    <property type="entry name" value="argB"/>
    <property type="match status" value="1"/>
</dbReference>
<dbReference type="PANTHER" id="PTHR23342">
    <property type="entry name" value="N-ACETYLGLUTAMATE SYNTHASE"/>
    <property type="match status" value="1"/>
</dbReference>
<dbReference type="PANTHER" id="PTHR23342:SF0">
    <property type="entry name" value="N-ACETYLGLUTAMATE SYNTHASE, MITOCHONDRIAL"/>
    <property type="match status" value="1"/>
</dbReference>
<dbReference type="Pfam" id="PF00696">
    <property type="entry name" value="AA_kinase"/>
    <property type="match status" value="1"/>
</dbReference>
<dbReference type="PIRSF" id="PIRSF000728">
    <property type="entry name" value="NAGK"/>
    <property type="match status" value="1"/>
</dbReference>
<dbReference type="SUPFAM" id="SSF53633">
    <property type="entry name" value="Carbamate kinase-like"/>
    <property type="match status" value="1"/>
</dbReference>
<gene>
    <name evidence="1" type="primary">argB</name>
    <name type="ordered locus">SSON_4132</name>
</gene>
<accession>Q3YV17</accession>
<feature type="chain" id="PRO_0000264760" description="Acetylglutamate kinase">
    <location>
        <begin position="1"/>
        <end position="258"/>
    </location>
</feature>
<feature type="binding site" evidence="1">
    <location>
        <begin position="44"/>
        <end position="45"/>
    </location>
    <ligand>
        <name>substrate</name>
    </ligand>
</feature>
<feature type="binding site" evidence="1">
    <location>
        <position position="66"/>
    </location>
    <ligand>
        <name>substrate</name>
    </ligand>
</feature>
<feature type="binding site" evidence="1">
    <location>
        <position position="158"/>
    </location>
    <ligand>
        <name>substrate</name>
    </ligand>
</feature>
<feature type="binding site" evidence="1">
    <location>
        <begin position="181"/>
        <end position="186"/>
    </location>
    <ligand>
        <name>ATP</name>
        <dbReference type="ChEBI" id="CHEBI:30616"/>
    </ligand>
</feature>
<feature type="binding site" evidence="1">
    <location>
        <begin position="209"/>
        <end position="211"/>
    </location>
    <ligand>
        <name>ATP</name>
        <dbReference type="ChEBI" id="CHEBI:30616"/>
    </ligand>
</feature>
<feature type="site" description="Transition state stabilizer" evidence="1">
    <location>
        <position position="8"/>
    </location>
</feature>
<feature type="site" description="Transition state stabilizer" evidence="1">
    <location>
        <position position="217"/>
    </location>
</feature>
<comment type="function">
    <text evidence="1">Catalyzes the ATP-dependent phosphorylation of N-acetyl-L-glutamate.</text>
</comment>
<comment type="catalytic activity">
    <reaction evidence="1">
        <text>N-acetyl-L-glutamate + ATP = N-acetyl-L-glutamyl 5-phosphate + ADP</text>
        <dbReference type="Rhea" id="RHEA:14629"/>
        <dbReference type="ChEBI" id="CHEBI:30616"/>
        <dbReference type="ChEBI" id="CHEBI:44337"/>
        <dbReference type="ChEBI" id="CHEBI:57936"/>
        <dbReference type="ChEBI" id="CHEBI:456216"/>
        <dbReference type="EC" id="2.7.2.8"/>
    </reaction>
</comment>
<comment type="pathway">
    <text evidence="1">Amino-acid biosynthesis; L-arginine biosynthesis; N(2)-acetyl-L-ornithine from L-glutamate: step 2/4.</text>
</comment>
<comment type="subunit">
    <text evidence="1">Homodimer.</text>
</comment>
<comment type="subcellular location">
    <subcellularLocation>
        <location evidence="1">Cytoplasm</location>
    </subcellularLocation>
</comment>
<comment type="similarity">
    <text evidence="1">Belongs to the acetylglutamate kinase family. ArgB subfamily.</text>
</comment>
<keyword id="KW-0028">Amino-acid biosynthesis</keyword>
<keyword id="KW-0055">Arginine biosynthesis</keyword>
<keyword id="KW-0067">ATP-binding</keyword>
<keyword id="KW-0963">Cytoplasm</keyword>
<keyword id="KW-0418">Kinase</keyword>
<keyword id="KW-0547">Nucleotide-binding</keyword>
<keyword id="KW-1185">Reference proteome</keyword>
<keyword id="KW-0808">Transferase</keyword>
<sequence length="258" mass="27190">MMNPLIIKLGGVLLDSEEALERLFSTLVNYRESHQRPLVIVHGGGCVVDELMKGLNLPVKKKNGLRVTPADQIDIITGALAGTANKTLLAWAKKHQIAAVGLFLGDGDSVKVTQLDEELGHVGLAQPGSPKLINSLLENGYLPVVSSIGVTDEGQLMNVNADQAATALAATLGADLILLSDVSGILDGKGQRIAEMTAAKAEQLIEQGIITDGMIVKVNAALDAARTLGRPVDIASWRHAEQLPALFNGMPMGTRILA</sequence>
<organism>
    <name type="scientific">Shigella sonnei (strain Ss046)</name>
    <dbReference type="NCBI Taxonomy" id="300269"/>
    <lineage>
        <taxon>Bacteria</taxon>
        <taxon>Pseudomonadati</taxon>
        <taxon>Pseudomonadota</taxon>
        <taxon>Gammaproteobacteria</taxon>
        <taxon>Enterobacterales</taxon>
        <taxon>Enterobacteriaceae</taxon>
        <taxon>Shigella</taxon>
    </lineage>
</organism>
<name>ARGB_SHISS</name>
<protein>
    <recommendedName>
        <fullName evidence="1">Acetylglutamate kinase</fullName>
        <ecNumber evidence="1">2.7.2.8</ecNumber>
    </recommendedName>
    <alternativeName>
        <fullName evidence="1">N-acetyl-L-glutamate 5-phosphotransferase</fullName>
    </alternativeName>
    <alternativeName>
        <fullName evidence="1">NAG kinase</fullName>
        <shortName evidence="1">NAGK</shortName>
    </alternativeName>
</protein>
<reference key="1">
    <citation type="journal article" date="2005" name="Nucleic Acids Res.">
        <title>Genome dynamics and diversity of Shigella species, the etiologic agents of bacillary dysentery.</title>
        <authorList>
            <person name="Yang F."/>
            <person name="Yang J."/>
            <person name="Zhang X."/>
            <person name="Chen L."/>
            <person name="Jiang Y."/>
            <person name="Yan Y."/>
            <person name="Tang X."/>
            <person name="Wang J."/>
            <person name="Xiong Z."/>
            <person name="Dong J."/>
            <person name="Xue Y."/>
            <person name="Zhu Y."/>
            <person name="Xu X."/>
            <person name="Sun L."/>
            <person name="Chen S."/>
            <person name="Nie H."/>
            <person name="Peng J."/>
            <person name="Xu J."/>
            <person name="Wang Y."/>
            <person name="Yuan Z."/>
            <person name="Wen Y."/>
            <person name="Yao Z."/>
            <person name="Shen Y."/>
            <person name="Qiang B."/>
            <person name="Hou Y."/>
            <person name="Yu J."/>
            <person name="Jin Q."/>
        </authorList>
    </citation>
    <scope>NUCLEOTIDE SEQUENCE [LARGE SCALE GENOMIC DNA]</scope>
    <source>
        <strain>Ss046</strain>
    </source>
</reference>
<proteinExistence type="inferred from homology"/>
<evidence type="ECO:0000255" key="1">
    <source>
        <dbReference type="HAMAP-Rule" id="MF_00082"/>
    </source>
</evidence>